<organism>
    <name type="scientific">Spinacia oleracea</name>
    <name type="common">Spinach</name>
    <dbReference type="NCBI Taxonomy" id="3562"/>
    <lineage>
        <taxon>Eukaryota</taxon>
        <taxon>Viridiplantae</taxon>
        <taxon>Streptophyta</taxon>
        <taxon>Embryophyta</taxon>
        <taxon>Tracheophyta</taxon>
        <taxon>Spermatophyta</taxon>
        <taxon>Magnoliopsida</taxon>
        <taxon>eudicotyledons</taxon>
        <taxon>Gunneridae</taxon>
        <taxon>Pentapetalae</taxon>
        <taxon>Caryophyllales</taxon>
        <taxon>Chenopodiaceae</taxon>
        <taxon>Chenopodioideae</taxon>
        <taxon>Anserineae</taxon>
        <taxon>Spinacia</taxon>
    </lineage>
</organism>
<accession>P61840</accession>
<accession>P37259</accession>
<proteinExistence type="evidence at protein level"/>
<sequence length="33" mass="3822">MEALVYTFLLVSTLGIIFFAIFFREPPKISTKK</sequence>
<geneLocation type="chloroplast"/>
<gene>
    <name evidence="1" type="primary">psbT</name>
    <name type="synonym">ycf8</name>
</gene>
<protein>
    <recommendedName>
        <fullName evidence="1">Photosystem II reaction center protein T</fullName>
        <shortName evidence="1">PSII-T</shortName>
    </recommendedName>
</protein>
<comment type="function">
    <text evidence="1">Found at the monomer-monomer interface of the photosystem II (PS II) dimer, plays a role in assembly and dimerization of PSII. PSII is a light-driven water plastoquinone oxidoreductase, using light energy to abstract electrons from H(2)O, generating a proton gradient subsequently used for ATP formation.</text>
</comment>
<comment type="subunit">
    <text evidence="1">PSII is composed of 1 copy each of membrane proteins PsbA, PsbB, PsbC, PsbD, PsbE, PsbF, PsbH, PsbI, PsbJ, PsbK, PsbL, PsbM, PsbT, PsbY, PsbZ, Psb30/Ycf12, at least 3 peripheral proteins of the oxygen-evolving complex and a large number of cofactors. It forms dimeric complexes.</text>
</comment>
<comment type="subcellular location">
    <subcellularLocation>
        <location evidence="1">Plastid</location>
        <location evidence="1">Chloroplast thylakoid membrane</location>
        <topology evidence="1">Single-pass membrane protein</topology>
    </subcellularLocation>
</comment>
<comment type="mass spectrometry" mass="3849.6" method="MALDI" evidence="2"/>
<comment type="similarity">
    <text evidence="1 3">Belongs to the PsbT family.</text>
</comment>
<dbReference type="EMBL" id="X02945">
    <property type="status" value="NOT_ANNOTATED_CDS"/>
    <property type="molecule type" value="Genomic_DNA"/>
</dbReference>
<dbReference type="EMBL" id="AF528912">
    <property type="protein sequence ID" value="AAQ09433.1"/>
    <property type="molecule type" value="Genomic_DNA"/>
</dbReference>
<dbReference type="EMBL" id="AJ400848">
    <property type="protein sequence ID" value="CAB88754.1"/>
    <property type="molecule type" value="Genomic_DNA"/>
</dbReference>
<dbReference type="RefSeq" id="NP_054961.1">
    <property type="nucleotide sequence ID" value="NC_002202.1"/>
</dbReference>
<dbReference type="PDB" id="3JCU">
    <property type="method" value="EM"/>
    <property type="resolution" value="3.20 A"/>
    <property type="chains" value="T/t=1-33"/>
</dbReference>
<dbReference type="PDB" id="8Z9D">
    <property type="method" value="EM"/>
    <property type="resolution" value="3.22 A"/>
    <property type="chains" value="T/TT/Tt/t=1-33"/>
</dbReference>
<dbReference type="PDBsum" id="3JCU"/>
<dbReference type="PDBsum" id="8Z9D"/>
<dbReference type="EMDB" id="EMD-39860"/>
<dbReference type="SMR" id="P61840"/>
<dbReference type="DIP" id="DIP-62025N"/>
<dbReference type="FunCoup" id="P61840">
    <property type="interactions" value="41"/>
</dbReference>
<dbReference type="IntAct" id="P61840">
    <property type="interactions" value="1"/>
</dbReference>
<dbReference type="STRING" id="3562.P61840"/>
<dbReference type="GeneID" id="2715620"/>
<dbReference type="KEGG" id="soe:2715620"/>
<dbReference type="InParanoid" id="P61840"/>
<dbReference type="OrthoDB" id="1558483at2759"/>
<dbReference type="Proteomes" id="UP001155700">
    <property type="component" value="Chloroplast Pltd"/>
</dbReference>
<dbReference type="GO" id="GO:0009535">
    <property type="term" value="C:chloroplast thylakoid membrane"/>
    <property type="evidence" value="ECO:0007669"/>
    <property type="project" value="UniProtKB-SubCell"/>
</dbReference>
<dbReference type="GO" id="GO:0009539">
    <property type="term" value="C:photosystem II reaction center"/>
    <property type="evidence" value="ECO:0007669"/>
    <property type="project" value="InterPro"/>
</dbReference>
<dbReference type="GO" id="GO:0015979">
    <property type="term" value="P:photosynthesis"/>
    <property type="evidence" value="ECO:0007669"/>
    <property type="project" value="UniProtKB-UniRule"/>
</dbReference>
<dbReference type="HAMAP" id="MF_00808">
    <property type="entry name" value="PSII_PsbT"/>
    <property type="match status" value="1"/>
</dbReference>
<dbReference type="InterPro" id="IPR001743">
    <property type="entry name" value="PSII_PsbT"/>
</dbReference>
<dbReference type="InterPro" id="IPR037268">
    <property type="entry name" value="PSII_PsbT_sf"/>
</dbReference>
<dbReference type="PANTHER" id="PTHR36411">
    <property type="match status" value="1"/>
</dbReference>
<dbReference type="PANTHER" id="PTHR36411:SF2">
    <property type="entry name" value="PHOTOSYSTEM II REACTION CENTER PROTEIN T"/>
    <property type="match status" value="1"/>
</dbReference>
<dbReference type="Pfam" id="PF01405">
    <property type="entry name" value="PsbT"/>
    <property type="match status" value="1"/>
</dbReference>
<dbReference type="SUPFAM" id="SSF161029">
    <property type="entry name" value="Photosystem II reaction center protein T, PsbT"/>
    <property type="match status" value="1"/>
</dbReference>
<keyword id="KW-0002">3D-structure</keyword>
<keyword id="KW-0150">Chloroplast</keyword>
<keyword id="KW-0903">Direct protein sequencing</keyword>
<keyword id="KW-0291">Formylation</keyword>
<keyword id="KW-0472">Membrane</keyword>
<keyword id="KW-0602">Photosynthesis</keyword>
<keyword id="KW-0604">Photosystem II</keyword>
<keyword id="KW-0934">Plastid</keyword>
<keyword id="KW-1185">Reference proteome</keyword>
<keyword id="KW-0793">Thylakoid</keyword>
<keyword id="KW-0812">Transmembrane</keyword>
<keyword id="KW-1133">Transmembrane helix</keyword>
<evidence type="ECO:0000255" key="1">
    <source>
        <dbReference type="HAMAP-Rule" id="MF_00808"/>
    </source>
</evidence>
<evidence type="ECO:0000269" key="2">
    <source>
    </source>
</evidence>
<evidence type="ECO:0000305" key="3"/>
<evidence type="ECO:0007829" key="4">
    <source>
        <dbReference type="PDB" id="3JCU"/>
    </source>
</evidence>
<reference key="1">
    <citation type="journal article" date="1984" name="Nucleic Acids Res.">
        <title>Nucleotide sequence of the gene for the P680 chlorophyll alpha apoprotein of the photosystem II reaction center from spinach.</title>
        <authorList>
            <person name="Morris J."/>
            <person name="Herrmann R.G."/>
        </authorList>
    </citation>
    <scope>NUCLEOTIDE SEQUENCE [GENOMIC DNA]</scope>
</reference>
<reference key="2">
    <citation type="submission" date="1984-06" db="EMBL/GenBank/DDBJ databases">
        <authorList>
            <person name="Morris J."/>
            <person name="Herrmann R.G."/>
        </authorList>
    </citation>
    <scope>SEQUENCE REVISION</scope>
</reference>
<reference key="3">
    <citation type="submission" date="2002-07" db="EMBL/GenBank/DDBJ databases">
        <title>Parsing out signal and noise for seed-plant phylogenetic inference.</title>
        <authorList>
            <person name="Graham S.W."/>
            <person name="Rai H.S."/>
            <person name="Ikegami K."/>
            <person name="Reeves P.A."/>
            <person name="Olmstead R.G."/>
        </authorList>
    </citation>
    <scope>NUCLEOTIDE SEQUENCE [GENOMIC DNA]</scope>
</reference>
<reference key="4">
    <citation type="journal article" date="2001" name="Plant Mol. Biol.">
        <title>The plastid chromosome of spinach (Spinacia oleracea): complete nucleotide sequence and gene organization.</title>
        <authorList>
            <person name="Schmitz-Linneweber C."/>
            <person name="Maier R.M."/>
            <person name="Alcaraz J.-P."/>
            <person name="Cottet A."/>
            <person name="Herrmann R.G."/>
            <person name="Mache R."/>
        </authorList>
    </citation>
    <scope>NUCLEOTIDE SEQUENCE [LARGE SCALE GENOMIC DNA]</scope>
    <source>
        <strain>cv. Geant d'hiver</strain>
        <strain>cv. Monatol</strain>
    </source>
</reference>
<reference key="5">
    <citation type="journal article" date="1998" name="J. Biol. Chem.">
        <title>Isolation and characterization of monomeric and dimeric CP47-reaction center photosystem II complexes.</title>
        <authorList>
            <person name="Zheleva D."/>
            <person name="Sharma J."/>
            <person name="Panico M."/>
            <person name="Morris H.R."/>
            <person name="Barber J."/>
        </authorList>
    </citation>
    <scope>PROTEIN SEQUENCE OF 1-8</scope>
    <scope>FORMYLATION AT MET-1</scope>
    <scope>MASS SPECTROMETRY</scope>
</reference>
<name>PSBT_SPIOL</name>
<feature type="chain" id="PRO_0000217985" description="Photosystem II reaction center protein T">
    <location>
        <begin position="1"/>
        <end position="33"/>
    </location>
</feature>
<feature type="transmembrane region" description="Helical" evidence="1">
    <location>
        <begin position="3"/>
        <end position="23"/>
    </location>
</feature>
<feature type="modified residue" description="N-formylmethionine" evidence="2">
    <location>
        <position position="1"/>
    </location>
</feature>
<feature type="helix" evidence="4">
    <location>
        <begin position="3"/>
        <end position="22"/>
    </location>
</feature>